<dbReference type="EMBL" id="CP000822">
    <property type="protein sequence ID" value="ABV14154.1"/>
    <property type="molecule type" value="Genomic_DNA"/>
</dbReference>
<dbReference type="RefSeq" id="WP_012133861.1">
    <property type="nucleotide sequence ID" value="NC_009792.1"/>
</dbReference>
<dbReference type="SMR" id="A8AKZ1"/>
<dbReference type="STRING" id="290338.CKO_03063"/>
<dbReference type="GeneID" id="45136869"/>
<dbReference type="KEGG" id="cko:CKO_03063"/>
<dbReference type="HOGENOM" id="CLU_033123_0_0_6"/>
<dbReference type="OrthoDB" id="9804062at2"/>
<dbReference type="Proteomes" id="UP000008148">
    <property type="component" value="Chromosome"/>
</dbReference>
<dbReference type="GO" id="GO:0009376">
    <property type="term" value="C:HslUV protease complex"/>
    <property type="evidence" value="ECO:0007669"/>
    <property type="project" value="UniProtKB-UniRule"/>
</dbReference>
<dbReference type="GO" id="GO:0005524">
    <property type="term" value="F:ATP binding"/>
    <property type="evidence" value="ECO:0007669"/>
    <property type="project" value="UniProtKB-UniRule"/>
</dbReference>
<dbReference type="GO" id="GO:0016887">
    <property type="term" value="F:ATP hydrolysis activity"/>
    <property type="evidence" value="ECO:0007669"/>
    <property type="project" value="InterPro"/>
</dbReference>
<dbReference type="GO" id="GO:0008233">
    <property type="term" value="F:peptidase activity"/>
    <property type="evidence" value="ECO:0007669"/>
    <property type="project" value="InterPro"/>
</dbReference>
<dbReference type="GO" id="GO:0036402">
    <property type="term" value="F:proteasome-activating activity"/>
    <property type="evidence" value="ECO:0007669"/>
    <property type="project" value="UniProtKB-UniRule"/>
</dbReference>
<dbReference type="GO" id="GO:0043335">
    <property type="term" value="P:protein unfolding"/>
    <property type="evidence" value="ECO:0007669"/>
    <property type="project" value="UniProtKB-UniRule"/>
</dbReference>
<dbReference type="GO" id="GO:0051603">
    <property type="term" value="P:proteolysis involved in protein catabolic process"/>
    <property type="evidence" value="ECO:0007669"/>
    <property type="project" value="TreeGrafter"/>
</dbReference>
<dbReference type="CDD" id="cd19498">
    <property type="entry name" value="RecA-like_HslU"/>
    <property type="match status" value="1"/>
</dbReference>
<dbReference type="FunFam" id="1.10.8.10:FF:000028">
    <property type="entry name" value="ATP-dependent protease ATPase subunit HslU"/>
    <property type="match status" value="2"/>
</dbReference>
<dbReference type="FunFam" id="1.10.8.60:FF:000027">
    <property type="entry name" value="ATP-dependent protease ATPase subunit HslU"/>
    <property type="match status" value="1"/>
</dbReference>
<dbReference type="FunFam" id="3.40.50.300:FF:000213">
    <property type="entry name" value="ATP-dependent protease ATPase subunit HslU"/>
    <property type="match status" value="1"/>
</dbReference>
<dbReference type="FunFam" id="3.40.50.300:FF:000220">
    <property type="entry name" value="ATP-dependent protease ATPase subunit HslU"/>
    <property type="match status" value="1"/>
</dbReference>
<dbReference type="Gene3D" id="1.10.8.60">
    <property type="match status" value="1"/>
</dbReference>
<dbReference type="Gene3D" id="1.10.8.10">
    <property type="entry name" value="DNA helicase RuvA subunit, C-terminal domain"/>
    <property type="match status" value="2"/>
</dbReference>
<dbReference type="Gene3D" id="3.40.50.300">
    <property type="entry name" value="P-loop containing nucleotide triphosphate hydrolases"/>
    <property type="match status" value="1"/>
</dbReference>
<dbReference type="HAMAP" id="MF_00249">
    <property type="entry name" value="HslU"/>
    <property type="match status" value="1"/>
</dbReference>
<dbReference type="InterPro" id="IPR003593">
    <property type="entry name" value="AAA+_ATPase"/>
</dbReference>
<dbReference type="InterPro" id="IPR050052">
    <property type="entry name" value="ATP-dep_Clp_protease_ClpX"/>
</dbReference>
<dbReference type="InterPro" id="IPR003959">
    <property type="entry name" value="ATPase_AAA_core"/>
</dbReference>
<dbReference type="InterPro" id="IPR019489">
    <property type="entry name" value="Clp_ATPase_C"/>
</dbReference>
<dbReference type="InterPro" id="IPR004491">
    <property type="entry name" value="HslU"/>
</dbReference>
<dbReference type="InterPro" id="IPR027417">
    <property type="entry name" value="P-loop_NTPase"/>
</dbReference>
<dbReference type="NCBIfam" id="TIGR00390">
    <property type="entry name" value="hslU"/>
    <property type="match status" value="1"/>
</dbReference>
<dbReference type="NCBIfam" id="NF003544">
    <property type="entry name" value="PRK05201.1"/>
    <property type="match status" value="1"/>
</dbReference>
<dbReference type="PANTHER" id="PTHR48102">
    <property type="entry name" value="ATP-DEPENDENT CLP PROTEASE ATP-BINDING SUBUNIT CLPX-LIKE, MITOCHONDRIAL-RELATED"/>
    <property type="match status" value="1"/>
</dbReference>
<dbReference type="PANTHER" id="PTHR48102:SF3">
    <property type="entry name" value="ATP-DEPENDENT PROTEASE ATPASE SUBUNIT HSLU"/>
    <property type="match status" value="1"/>
</dbReference>
<dbReference type="Pfam" id="PF00004">
    <property type="entry name" value="AAA"/>
    <property type="match status" value="1"/>
</dbReference>
<dbReference type="Pfam" id="PF07724">
    <property type="entry name" value="AAA_2"/>
    <property type="match status" value="1"/>
</dbReference>
<dbReference type="SMART" id="SM00382">
    <property type="entry name" value="AAA"/>
    <property type="match status" value="1"/>
</dbReference>
<dbReference type="SMART" id="SM01086">
    <property type="entry name" value="ClpB_D2-small"/>
    <property type="match status" value="1"/>
</dbReference>
<dbReference type="SUPFAM" id="SSF52540">
    <property type="entry name" value="P-loop containing nucleoside triphosphate hydrolases"/>
    <property type="match status" value="1"/>
</dbReference>
<accession>A8AKZ1</accession>
<proteinExistence type="inferred from homology"/>
<gene>
    <name evidence="1" type="primary">hslU</name>
    <name type="ordered locus">CKO_03063</name>
</gene>
<feature type="chain" id="PRO_1000012728" description="ATP-dependent protease ATPase subunit HslU">
    <location>
        <begin position="1"/>
        <end position="443"/>
    </location>
</feature>
<feature type="binding site" evidence="1">
    <location>
        <position position="18"/>
    </location>
    <ligand>
        <name>ATP</name>
        <dbReference type="ChEBI" id="CHEBI:30616"/>
    </ligand>
</feature>
<feature type="binding site" evidence="1">
    <location>
        <begin position="60"/>
        <end position="65"/>
    </location>
    <ligand>
        <name>ATP</name>
        <dbReference type="ChEBI" id="CHEBI:30616"/>
    </ligand>
</feature>
<feature type="binding site" evidence="1">
    <location>
        <position position="256"/>
    </location>
    <ligand>
        <name>ATP</name>
        <dbReference type="ChEBI" id="CHEBI:30616"/>
    </ligand>
</feature>
<feature type="binding site" evidence="1">
    <location>
        <position position="321"/>
    </location>
    <ligand>
        <name>ATP</name>
        <dbReference type="ChEBI" id="CHEBI:30616"/>
    </ligand>
</feature>
<feature type="binding site" evidence="1">
    <location>
        <position position="393"/>
    </location>
    <ligand>
        <name>ATP</name>
        <dbReference type="ChEBI" id="CHEBI:30616"/>
    </ligand>
</feature>
<name>HSLU_CITK8</name>
<comment type="function">
    <text evidence="1">ATPase subunit of a proteasome-like degradation complex; this subunit has chaperone activity. The binding of ATP and its subsequent hydrolysis by HslU are essential for unfolding of protein substrates subsequently hydrolyzed by HslV. HslU recognizes the N-terminal part of its protein substrates and unfolds these before they are guided to HslV for hydrolysis.</text>
</comment>
<comment type="subunit">
    <text evidence="1">A double ring-shaped homohexamer of HslV is capped on each side by a ring-shaped HslU homohexamer. The assembly of the HslU/HslV complex is dependent on binding of ATP.</text>
</comment>
<comment type="subcellular location">
    <subcellularLocation>
        <location evidence="1">Cytoplasm</location>
    </subcellularLocation>
</comment>
<comment type="similarity">
    <text evidence="1">Belongs to the ClpX chaperone family. HslU subfamily.</text>
</comment>
<keyword id="KW-0067">ATP-binding</keyword>
<keyword id="KW-0143">Chaperone</keyword>
<keyword id="KW-0963">Cytoplasm</keyword>
<keyword id="KW-0547">Nucleotide-binding</keyword>
<keyword id="KW-1185">Reference proteome</keyword>
<sequence length="443" mass="49681">MSEMTPREIVSELNKHIIGQDNAKRSVAIALRNRWRRMQLNEELRHEVTPKNILMIGPTGVGKTEIARRLAKLANAPFIKVEATKFTEVGYVGKEVDSIIRDLTDSAIKMVRVQSIEKNRYRAEEMAEERILDALIPPAKNNWGQAEQQQEPSAARQAFRKKLREGQLDDKEIEINLAAAPMGVEIMAPPGMEEMTSQLQSMFQNLGGQKQKPRKLKIKDAMKLLIEEEAAKLVNPEELKQEAIDAVEQHGIVFIDEIDKICKRGESSGPDVSREGVQRDLLPLVEGCTVSTKHGMVKTDHILFIASGAFQVAKPSDLIPELQGRLPIRVELKALTTEDFERILTEPNASVTVQYKALMATEGVDIEFTESGIKRIAEAAWQVNETTENIGARRLHTVLERLMEDISYDASDLNGQSITIDAEYVSKHLDALVADEDLSRFIL</sequence>
<organism>
    <name type="scientific">Citrobacter koseri (strain ATCC BAA-895 / CDC 4225-83 / SGSC4696)</name>
    <dbReference type="NCBI Taxonomy" id="290338"/>
    <lineage>
        <taxon>Bacteria</taxon>
        <taxon>Pseudomonadati</taxon>
        <taxon>Pseudomonadota</taxon>
        <taxon>Gammaproteobacteria</taxon>
        <taxon>Enterobacterales</taxon>
        <taxon>Enterobacteriaceae</taxon>
        <taxon>Citrobacter</taxon>
    </lineage>
</organism>
<protein>
    <recommendedName>
        <fullName evidence="1">ATP-dependent protease ATPase subunit HslU</fullName>
    </recommendedName>
    <alternativeName>
        <fullName evidence="1">Unfoldase HslU</fullName>
    </alternativeName>
</protein>
<reference key="1">
    <citation type="submission" date="2007-08" db="EMBL/GenBank/DDBJ databases">
        <authorList>
            <consortium name="The Citrobacter koseri Genome Sequencing Project"/>
            <person name="McClelland M."/>
            <person name="Sanderson E.K."/>
            <person name="Porwollik S."/>
            <person name="Spieth J."/>
            <person name="Clifton W.S."/>
            <person name="Latreille P."/>
            <person name="Courtney L."/>
            <person name="Wang C."/>
            <person name="Pepin K."/>
            <person name="Bhonagiri V."/>
            <person name="Nash W."/>
            <person name="Johnson M."/>
            <person name="Thiruvilangam P."/>
            <person name="Wilson R."/>
        </authorList>
    </citation>
    <scope>NUCLEOTIDE SEQUENCE [LARGE SCALE GENOMIC DNA]</scope>
    <source>
        <strain>ATCC BAA-895 / CDC 4225-83 / SGSC4696</strain>
    </source>
</reference>
<evidence type="ECO:0000255" key="1">
    <source>
        <dbReference type="HAMAP-Rule" id="MF_00249"/>
    </source>
</evidence>